<keyword id="KW-0997">Cell inner membrane</keyword>
<keyword id="KW-1003">Cell membrane</keyword>
<keyword id="KW-0175">Coiled coil</keyword>
<keyword id="KW-0472">Membrane</keyword>
<keyword id="KW-1185">Reference proteome</keyword>
<keyword id="KW-0812">Transmembrane</keyword>
<keyword id="KW-1133">Transmembrane helix</keyword>
<organism>
    <name type="scientific">Haemophilus influenzae (strain ATCC 51907 / DSM 11121 / KW20 / Rd)</name>
    <dbReference type="NCBI Taxonomy" id="71421"/>
    <lineage>
        <taxon>Bacteria</taxon>
        <taxon>Pseudomonadati</taxon>
        <taxon>Pseudomonadota</taxon>
        <taxon>Gammaproteobacteria</taxon>
        <taxon>Pasteurellales</taxon>
        <taxon>Pasteurellaceae</taxon>
        <taxon>Haemophilus</taxon>
    </lineage>
</organism>
<reference key="1">
    <citation type="journal article" date="1995" name="Science">
        <title>Whole-genome random sequencing and assembly of Haemophilus influenzae Rd.</title>
        <authorList>
            <person name="Fleischmann R.D."/>
            <person name="Adams M.D."/>
            <person name="White O."/>
            <person name="Clayton R.A."/>
            <person name="Kirkness E.F."/>
            <person name="Kerlavage A.R."/>
            <person name="Bult C.J."/>
            <person name="Tomb J.-F."/>
            <person name="Dougherty B.A."/>
            <person name="Merrick J.M."/>
            <person name="McKenney K."/>
            <person name="Sutton G.G."/>
            <person name="FitzHugh W."/>
            <person name="Fields C.A."/>
            <person name="Gocayne J.D."/>
            <person name="Scott J.D."/>
            <person name="Shirley R."/>
            <person name="Liu L.-I."/>
            <person name="Glodek A."/>
            <person name="Kelley J.M."/>
            <person name="Weidman J.F."/>
            <person name="Phillips C.A."/>
            <person name="Spriggs T."/>
            <person name="Hedblom E."/>
            <person name="Cotton M.D."/>
            <person name="Utterback T.R."/>
            <person name="Hanna M.C."/>
            <person name="Nguyen D.T."/>
            <person name="Saudek D.M."/>
            <person name="Brandon R.C."/>
            <person name="Fine L.D."/>
            <person name="Fritchman J.L."/>
            <person name="Fuhrmann J.L."/>
            <person name="Geoghagen N.S.M."/>
            <person name="Gnehm C.L."/>
            <person name="McDonald L.A."/>
            <person name="Small K.V."/>
            <person name="Fraser C.M."/>
            <person name="Smith H.O."/>
            <person name="Venter J.C."/>
        </authorList>
    </citation>
    <scope>NUCLEOTIDE SEQUENCE [LARGE SCALE GENOMIC DNA]</scope>
    <source>
        <strain>ATCC 51907 / DSM 11121 / KW20 / Rd</strain>
    </source>
</reference>
<sequence length="97" mass="10915">MIKYILGIVIFIAIVLVAITIGANNDQIITFNYIVAESQFQLSSLVAILFGLGLILGWLITAFFYIKLKLKNMALARQVKRQTLQINELTTTRDKVV</sequence>
<evidence type="ECO:0000255" key="1">
    <source>
        <dbReference type="HAMAP-Rule" id="MF_01948"/>
    </source>
</evidence>
<name>LAPA_HAEIN</name>
<proteinExistence type="inferred from homology"/>
<feature type="chain" id="PRO_0000168888" description="Probable lipopolysaccharide assembly protein A">
    <location>
        <begin position="1"/>
        <end position="97"/>
    </location>
</feature>
<feature type="transmembrane region" description="Helical" evidence="1">
    <location>
        <begin position="1"/>
        <end position="21"/>
    </location>
</feature>
<feature type="transmembrane region" description="Helical" evidence="1">
    <location>
        <begin position="46"/>
        <end position="66"/>
    </location>
</feature>
<feature type="coiled-coil region" evidence="1">
    <location>
        <begin position="67"/>
        <end position="95"/>
    </location>
</feature>
<gene>
    <name evidence="1" type="primary">lapA</name>
    <name type="ordered locus">HI_1222</name>
</gene>
<accession>P44129</accession>
<dbReference type="EMBL" id="L42023">
    <property type="protein sequence ID" value="AAC22875.1"/>
    <property type="molecule type" value="Genomic_DNA"/>
</dbReference>
<dbReference type="PIR" id="C64022">
    <property type="entry name" value="C64022"/>
</dbReference>
<dbReference type="RefSeq" id="NP_439378.1">
    <property type="nucleotide sequence ID" value="NC_000907.1"/>
</dbReference>
<dbReference type="SMR" id="P44129"/>
<dbReference type="STRING" id="71421.HI_1222"/>
<dbReference type="EnsemblBacteria" id="AAC22875">
    <property type="protein sequence ID" value="AAC22875"/>
    <property type="gene ID" value="HI_1222"/>
</dbReference>
<dbReference type="KEGG" id="hin:HI_1222"/>
<dbReference type="PATRIC" id="fig|71421.8.peg.1274"/>
<dbReference type="eggNOG" id="COG3771">
    <property type="taxonomic scope" value="Bacteria"/>
</dbReference>
<dbReference type="HOGENOM" id="CLU_160072_0_0_6"/>
<dbReference type="OrthoDB" id="7064015at2"/>
<dbReference type="BioCyc" id="HINF71421:G1GJ1-1253-MONOMER"/>
<dbReference type="Proteomes" id="UP000000579">
    <property type="component" value="Chromosome"/>
</dbReference>
<dbReference type="GO" id="GO:0005886">
    <property type="term" value="C:plasma membrane"/>
    <property type="evidence" value="ECO:0007669"/>
    <property type="project" value="UniProtKB-SubCell"/>
</dbReference>
<dbReference type="GO" id="GO:0008653">
    <property type="term" value="P:lipopolysaccharide metabolic process"/>
    <property type="evidence" value="ECO:0007669"/>
    <property type="project" value="InterPro"/>
</dbReference>
<dbReference type="HAMAP" id="MF_01948">
    <property type="entry name" value="LPS_assembly_LapA"/>
    <property type="match status" value="1"/>
</dbReference>
<dbReference type="InterPro" id="IPR032906">
    <property type="entry name" value="LapA"/>
</dbReference>
<dbReference type="InterPro" id="IPR010445">
    <property type="entry name" value="LapA_dom"/>
</dbReference>
<dbReference type="Pfam" id="PF06305">
    <property type="entry name" value="LapA_dom"/>
    <property type="match status" value="1"/>
</dbReference>
<protein>
    <recommendedName>
        <fullName evidence="1">Probable lipopolysaccharide assembly protein A</fullName>
    </recommendedName>
</protein>
<comment type="function">
    <text evidence="1">Involved in the assembly of lipopolysaccharide (LPS).</text>
</comment>
<comment type="subcellular location">
    <subcellularLocation>
        <location evidence="1">Cell inner membrane</location>
        <topology evidence="1">Multi-pass membrane protein</topology>
    </subcellularLocation>
</comment>
<comment type="similarity">
    <text evidence="1">Belongs to the LapA family.</text>
</comment>